<gene>
    <name type="primary">hisI</name>
    <name type="synonym">hisIE</name>
    <name type="ordered locus">BU106</name>
</gene>
<comment type="catalytic activity">
    <reaction>
        <text>1-(5-phospho-beta-D-ribosyl)-ATP + H2O = 1-(5-phospho-beta-D-ribosyl)-5'-AMP + diphosphate + H(+)</text>
        <dbReference type="Rhea" id="RHEA:22828"/>
        <dbReference type="ChEBI" id="CHEBI:15377"/>
        <dbReference type="ChEBI" id="CHEBI:15378"/>
        <dbReference type="ChEBI" id="CHEBI:33019"/>
        <dbReference type="ChEBI" id="CHEBI:59457"/>
        <dbReference type="ChEBI" id="CHEBI:73183"/>
        <dbReference type="EC" id="3.6.1.31"/>
    </reaction>
</comment>
<comment type="catalytic activity">
    <reaction>
        <text>1-(5-phospho-beta-D-ribosyl)-5'-AMP + H2O = 1-(5-phospho-beta-D-ribosyl)-5-[(5-phospho-beta-D-ribosylamino)methylideneamino]imidazole-4-carboxamide</text>
        <dbReference type="Rhea" id="RHEA:20049"/>
        <dbReference type="ChEBI" id="CHEBI:15377"/>
        <dbReference type="ChEBI" id="CHEBI:58435"/>
        <dbReference type="ChEBI" id="CHEBI:59457"/>
        <dbReference type="EC" id="3.5.4.19"/>
    </reaction>
</comment>
<comment type="pathway">
    <text>Amino-acid biosynthesis; L-histidine biosynthesis; L-histidine from 5-phospho-alpha-D-ribose 1-diphosphate: step 2/9.</text>
</comment>
<comment type="pathway">
    <text>Amino-acid biosynthesis; L-histidine biosynthesis; L-histidine from 5-phospho-alpha-D-ribose 1-diphosphate: step 3/9.</text>
</comment>
<comment type="subcellular location">
    <subcellularLocation>
        <location evidence="1">Cytoplasm</location>
    </subcellularLocation>
</comment>
<comment type="similarity">
    <text evidence="2">In the N-terminal section; belongs to the PRA-CH family.</text>
</comment>
<comment type="similarity">
    <text evidence="2">In the C-terminal section; belongs to the PRA-PH family.</text>
</comment>
<organism>
    <name type="scientific">Buchnera aphidicola subsp. Acyrthosiphon pisum (strain APS)</name>
    <name type="common">Acyrthosiphon pisum symbiotic bacterium</name>
    <dbReference type="NCBI Taxonomy" id="107806"/>
    <lineage>
        <taxon>Bacteria</taxon>
        <taxon>Pseudomonadati</taxon>
        <taxon>Pseudomonadota</taxon>
        <taxon>Gammaproteobacteria</taxon>
        <taxon>Enterobacterales</taxon>
        <taxon>Erwiniaceae</taxon>
        <taxon>Buchnera</taxon>
    </lineage>
</organism>
<keyword id="KW-0028">Amino-acid biosynthesis</keyword>
<keyword id="KW-0067">ATP-binding</keyword>
<keyword id="KW-0963">Cytoplasm</keyword>
<keyword id="KW-0368">Histidine biosynthesis</keyword>
<keyword id="KW-0378">Hydrolase</keyword>
<keyword id="KW-0511">Multifunctional enzyme</keyword>
<keyword id="KW-0547">Nucleotide-binding</keyword>
<keyword id="KW-1185">Reference proteome</keyword>
<accession>P57207</accession>
<proteinExistence type="inferred from homology"/>
<reference key="1">
    <citation type="journal article" date="2000" name="Nature">
        <title>Genome sequence of the endocellular bacterial symbiont of aphids Buchnera sp. APS.</title>
        <authorList>
            <person name="Shigenobu S."/>
            <person name="Watanabe H."/>
            <person name="Hattori M."/>
            <person name="Sakaki Y."/>
            <person name="Ishikawa H."/>
        </authorList>
    </citation>
    <scope>NUCLEOTIDE SEQUENCE [LARGE SCALE GENOMIC DNA]</scope>
    <source>
        <strain>APS</strain>
    </source>
</reference>
<dbReference type="EC" id="3.5.4.19"/>
<dbReference type="EC" id="3.6.1.31"/>
<dbReference type="EMBL" id="BA000003">
    <property type="protein sequence ID" value="BAB12825.1"/>
    <property type="molecule type" value="Genomic_DNA"/>
</dbReference>
<dbReference type="RefSeq" id="NP_239939.1">
    <property type="nucleotide sequence ID" value="NC_002528.1"/>
</dbReference>
<dbReference type="RefSeq" id="WP_010895947.1">
    <property type="nucleotide sequence ID" value="NC_002528.1"/>
</dbReference>
<dbReference type="SMR" id="P57207"/>
<dbReference type="STRING" id="563178.BUAP5A_104"/>
<dbReference type="EnsemblBacteria" id="BAB12825">
    <property type="protein sequence ID" value="BAB12825"/>
    <property type="gene ID" value="BAB12825"/>
</dbReference>
<dbReference type="KEGG" id="buc:BU106"/>
<dbReference type="PATRIC" id="fig|107806.10.peg.114"/>
<dbReference type="eggNOG" id="COG0139">
    <property type="taxonomic scope" value="Bacteria"/>
</dbReference>
<dbReference type="eggNOG" id="COG0140">
    <property type="taxonomic scope" value="Bacteria"/>
</dbReference>
<dbReference type="HOGENOM" id="CLU_048577_3_1_6"/>
<dbReference type="UniPathway" id="UPA00031">
    <property type="reaction ID" value="UER00007"/>
</dbReference>
<dbReference type="UniPathway" id="UPA00031">
    <property type="reaction ID" value="UER00008"/>
</dbReference>
<dbReference type="Proteomes" id="UP000001806">
    <property type="component" value="Chromosome"/>
</dbReference>
<dbReference type="GO" id="GO:0005737">
    <property type="term" value="C:cytoplasm"/>
    <property type="evidence" value="ECO:0007669"/>
    <property type="project" value="UniProtKB-SubCell"/>
</dbReference>
<dbReference type="GO" id="GO:0005524">
    <property type="term" value="F:ATP binding"/>
    <property type="evidence" value="ECO:0007669"/>
    <property type="project" value="UniProtKB-KW"/>
</dbReference>
<dbReference type="GO" id="GO:0004635">
    <property type="term" value="F:phosphoribosyl-AMP cyclohydrolase activity"/>
    <property type="evidence" value="ECO:0007669"/>
    <property type="project" value="UniProtKB-UniRule"/>
</dbReference>
<dbReference type="GO" id="GO:0004636">
    <property type="term" value="F:phosphoribosyl-ATP diphosphatase activity"/>
    <property type="evidence" value="ECO:0007669"/>
    <property type="project" value="UniProtKB-UniRule"/>
</dbReference>
<dbReference type="GO" id="GO:0000105">
    <property type="term" value="P:L-histidine biosynthetic process"/>
    <property type="evidence" value="ECO:0007669"/>
    <property type="project" value="UniProtKB-UniRule"/>
</dbReference>
<dbReference type="CDD" id="cd11534">
    <property type="entry name" value="NTP-PPase_HisIE_like"/>
    <property type="match status" value="1"/>
</dbReference>
<dbReference type="FunFam" id="1.10.287.1080:FF:000002">
    <property type="entry name" value="Histidine biosynthesis bifunctional protein HisIE"/>
    <property type="match status" value="1"/>
</dbReference>
<dbReference type="FunFam" id="3.10.20.810:FF:000001">
    <property type="entry name" value="Histidine biosynthesis bifunctional protein HisIE"/>
    <property type="match status" value="1"/>
</dbReference>
<dbReference type="Gene3D" id="1.10.287.1080">
    <property type="entry name" value="MazG-like"/>
    <property type="match status" value="1"/>
</dbReference>
<dbReference type="Gene3D" id="3.10.20.810">
    <property type="entry name" value="Phosphoribosyl-AMP cyclohydrolase"/>
    <property type="match status" value="1"/>
</dbReference>
<dbReference type="HAMAP" id="MF_01020">
    <property type="entry name" value="HisE"/>
    <property type="match status" value="1"/>
</dbReference>
<dbReference type="HAMAP" id="MF_01019">
    <property type="entry name" value="HisIE"/>
    <property type="match status" value="1"/>
</dbReference>
<dbReference type="InterPro" id="IPR023019">
    <property type="entry name" value="His_synth_HisIE"/>
</dbReference>
<dbReference type="InterPro" id="IPR008179">
    <property type="entry name" value="HisE"/>
</dbReference>
<dbReference type="InterPro" id="IPR021130">
    <property type="entry name" value="PRib-ATP_PPHydrolase-like"/>
</dbReference>
<dbReference type="InterPro" id="IPR002496">
    <property type="entry name" value="PRib_AMP_CycHydrolase_dom"/>
</dbReference>
<dbReference type="InterPro" id="IPR038019">
    <property type="entry name" value="PRib_AMP_CycHydrolase_sf"/>
</dbReference>
<dbReference type="NCBIfam" id="TIGR03188">
    <property type="entry name" value="histidine_hisI"/>
    <property type="match status" value="1"/>
</dbReference>
<dbReference type="NCBIfam" id="NF000768">
    <property type="entry name" value="PRK00051.1"/>
    <property type="match status" value="1"/>
</dbReference>
<dbReference type="NCBIfam" id="NF002747">
    <property type="entry name" value="PRK02759.1"/>
    <property type="match status" value="1"/>
</dbReference>
<dbReference type="PANTHER" id="PTHR42945">
    <property type="entry name" value="HISTIDINE BIOSYNTHESIS BIFUNCTIONAL PROTEIN"/>
    <property type="match status" value="1"/>
</dbReference>
<dbReference type="PANTHER" id="PTHR42945:SF9">
    <property type="entry name" value="HISTIDINE BIOSYNTHESIS BIFUNCTIONAL PROTEIN HISIE"/>
    <property type="match status" value="1"/>
</dbReference>
<dbReference type="Pfam" id="PF01502">
    <property type="entry name" value="PRA-CH"/>
    <property type="match status" value="1"/>
</dbReference>
<dbReference type="Pfam" id="PF01503">
    <property type="entry name" value="PRA-PH"/>
    <property type="match status" value="1"/>
</dbReference>
<dbReference type="SUPFAM" id="SSF101386">
    <property type="entry name" value="all-alpha NTP pyrophosphatases"/>
    <property type="match status" value="1"/>
</dbReference>
<dbReference type="SUPFAM" id="SSF141734">
    <property type="entry name" value="HisI-like"/>
    <property type="match status" value="1"/>
</dbReference>
<feature type="chain" id="PRO_0000136405" description="Histidine biosynthesis bifunctional protein HisIE">
    <location>
        <begin position="1"/>
        <end position="215"/>
    </location>
</feature>
<feature type="region of interest" description="Phosphoribosyl-AMP cyclohydrolase">
    <location>
        <begin position="1"/>
        <end position="114"/>
    </location>
</feature>
<feature type="region of interest" description="Phosphoribosyl-ATP pyrophosphohydrolase">
    <location>
        <begin position="115"/>
        <end position="215"/>
    </location>
</feature>
<name>HIS2_BUCAI</name>
<evidence type="ECO:0000250" key="1"/>
<evidence type="ECO:0000305" key="2"/>
<protein>
    <recommendedName>
        <fullName>Histidine biosynthesis bifunctional protein HisIE</fullName>
    </recommendedName>
    <domain>
        <recommendedName>
            <fullName>Phosphoribosyl-AMP cyclohydrolase</fullName>
            <shortName>PRA-CH</shortName>
            <ecNumber>3.5.4.19</ecNumber>
        </recommendedName>
    </domain>
    <domain>
        <recommendedName>
            <fullName>Phosphoribosyl-ATP pyrophosphatase</fullName>
            <shortName>PRA-PH</shortName>
            <ecNumber>3.6.1.31</ecNumber>
        </recommendedName>
    </domain>
</protein>
<sequence>MLKKHDLLNLDWTKTNGMIPVIIQDYSSSEVLMHGYMNQDALTKTQEDGLVTFYSRTKNCLWTKGEISGNYLKVIEISTDCDNDTLLILVAAQGKTCHLGNSSCFISNKYNINFLFKLEEIIEERKNKFSDNSYTSSLYKSGTSRIAQKVGEEAIETILAAMNKDQIELINEASDLIYHLVVLLHDQDLNFNLVIDNLKKRREKNLNTNSEKLLK</sequence>